<feature type="chain" id="PRO_1000018613" description="N-(5'-phosphoribosyl)anthranilate isomerase">
    <location>
        <begin position="1"/>
        <end position="208"/>
    </location>
</feature>
<reference key="1">
    <citation type="submission" date="2003-03" db="EMBL/GenBank/DDBJ databases">
        <title>The complete genome sequence of Neisseria gonorrhoeae.</title>
        <authorList>
            <person name="Lewis L.A."/>
            <person name="Gillaspy A.F."/>
            <person name="McLaughlin R.E."/>
            <person name="Gipson M."/>
            <person name="Ducey T.F."/>
            <person name="Ownbey T."/>
            <person name="Hartman K."/>
            <person name="Nydick C."/>
            <person name="Carson M.B."/>
            <person name="Vaughn J."/>
            <person name="Thomson C."/>
            <person name="Song L."/>
            <person name="Lin S."/>
            <person name="Yuan X."/>
            <person name="Najar F."/>
            <person name="Zhan M."/>
            <person name="Ren Q."/>
            <person name="Zhu H."/>
            <person name="Qi S."/>
            <person name="Kenton S.M."/>
            <person name="Lai H."/>
            <person name="White J.D."/>
            <person name="Clifton S."/>
            <person name="Roe B.A."/>
            <person name="Dyer D.W."/>
        </authorList>
    </citation>
    <scope>NUCLEOTIDE SEQUENCE [LARGE SCALE GENOMIC DNA]</scope>
    <source>
        <strain>ATCC 700825 / FA 1090</strain>
    </source>
</reference>
<proteinExistence type="inferred from homology"/>
<protein>
    <recommendedName>
        <fullName evidence="1">N-(5'-phosphoribosyl)anthranilate isomerase</fullName>
        <shortName evidence="1">PRAI</shortName>
        <ecNumber evidence="1">5.3.1.24</ecNumber>
    </recommendedName>
</protein>
<organism>
    <name type="scientific">Neisseria gonorrhoeae (strain ATCC 700825 / FA 1090)</name>
    <dbReference type="NCBI Taxonomy" id="242231"/>
    <lineage>
        <taxon>Bacteria</taxon>
        <taxon>Pseudomonadati</taxon>
        <taxon>Pseudomonadota</taxon>
        <taxon>Betaproteobacteria</taxon>
        <taxon>Neisseriales</taxon>
        <taxon>Neisseriaceae</taxon>
        <taxon>Neisseria</taxon>
    </lineage>
</organism>
<evidence type="ECO:0000255" key="1">
    <source>
        <dbReference type="HAMAP-Rule" id="MF_00135"/>
    </source>
</evidence>
<sequence length="208" mass="22531">MRKIRTKICGITTPEDALYAAHAGADALGLVFYPQSPRAIDIIKAQKIAAALPPFVSVVALFVNESAQNIRRILAEVPIHIIQFHGDEDDAFCRQFDRPYIKAIRVQTASDIRNAATRFPNAQALLFDAYHPSEYGGTGHRFDWTLLAEYSGKPWVLAGGLTPENVGEAVRITGAEAVDVSGGVEASKGKKDPAKVAAFIATANRLSR</sequence>
<comment type="catalytic activity">
    <reaction evidence="1">
        <text>N-(5-phospho-beta-D-ribosyl)anthranilate = 1-(2-carboxyphenylamino)-1-deoxy-D-ribulose 5-phosphate</text>
        <dbReference type="Rhea" id="RHEA:21540"/>
        <dbReference type="ChEBI" id="CHEBI:18277"/>
        <dbReference type="ChEBI" id="CHEBI:58613"/>
        <dbReference type="EC" id="5.3.1.24"/>
    </reaction>
</comment>
<comment type="pathway">
    <text evidence="1">Amino-acid biosynthesis; L-tryptophan biosynthesis; L-tryptophan from chorismate: step 3/5.</text>
</comment>
<comment type="similarity">
    <text evidence="1">Belongs to the TrpF family.</text>
</comment>
<gene>
    <name evidence="1" type="primary">trpF</name>
    <name type="ordered locus">NGO_0261</name>
</gene>
<name>TRPF_NEIG1</name>
<keyword id="KW-0028">Amino-acid biosynthesis</keyword>
<keyword id="KW-0057">Aromatic amino acid biosynthesis</keyword>
<keyword id="KW-0413">Isomerase</keyword>
<keyword id="KW-1185">Reference proteome</keyword>
<keyword id="KW-0822">Tryptophan biosynthesis</keyword>
<dbReference type="EC" id="5.3.1.24" evidence="1"/>
<dbReference type="EMBL" id="AE004969">
    <property type="protein sequence ID" value="AAW89012.1"/>
    <property type="molecule type" value="Genomic_DNA"/>
</dbReference>
<dbReference type="RefSeq" id="WP_003687611.1">
    <property type="nucleotide sequence ID" value="NC_002946.2"/>
</dbReference>
<dbReference type="RefSeq" id="YP_207424.1">
    <property type="nucleotide sequence ID" value="NC_002946.2"/>
</dbReference>
<dbReference type="SMR" id="Q5F9X5"/>
<dbReference type="STRING" id="242231.NGO_0261"/>
<dbReference type="KEGG" id="ngo:NGO_0261"/>
<dbReference type="PATRIC" id="fig|242231.10.peg.325"/>
<dbReference type="HOGENOM" id="CLU_076364_2_0_4"/>
<dbReference type="UniPathway" id="UPA00035">
    <property type="reaction ID" value="UER00042"/>
</dbReference>
<dbReference type="Proteomes" id="UP000000535">
    <property type="component" value="Chromosome"/>
</dbReference>
<dbReference type="GO" id="GO:0004640">
    <property type="term" value="F:phosphoribosylanthranilate isomerase activity"/>
    <property type="evidence" value="ECO:0007669"/>
    <property type="project" value="UniProtKB-UniRule"/>
</dbReference>
<dbReference type="GO" id="GO:0000162">
    <property type="term" value="P:L-tryptophan biosynthetic process"/>
    <property type="evidence" value="ECO:0007669"/>
    <property type="project" value="UniProtKB-UniRule"/>
</dbReference>
<dbReference type="CDD" id="cd00405">
    <property type="entry name" value="PRAI"/>
    <property type="match status" value="1"/>
</dbReference>
<dbReference type="FunFam" id="3.20.20.70:FF:000075">
    <property type="entry name" value="Tryptophan biosynthesis protein TRP1"/>
    <property type="match status" value="1"/>
</dbReference>
<dbReference type="Gene3D" id="3.20.20.70">
    <property type="entry name" value="Aldolase class I"/>
    <property type="match status" value="1"/>
</dbReference>
<dbReference type="HAMAP" id="MF_00135">
    <property type="entry name" value="PRAI"/>
    <property type="match status" value="1"/>
</dbReference>
<dbReference type="InterPro" id="IPR013785">
    <property type="entry name" value="Aldolase_TIM"/>
</dbReference>
<dbReference type="InterPro" id="IPR001240">
    <property type="entry name" value="PRAI_dom"/>
</dbReference>
<dbReference type="InterPro" id="IPR011060">
    <property type="entry name" value="RibuloseP-bd_barrel"/>
</dbReference>
<dbReference type="InterPro" id="IPR044643">
    <property type="entry name" value="TrpF_fam"/>
</dbReference>
<dbReference type="NCBIfam" id="NF002298">
    <property type="entry name" value="PRK01222.1-4"/>
    <property type="match status" value="1"/>
</dbReference>
<dbReference type="PANTHER" id="PTHR42894">
    <property type="entry name" value="N-(5'-PHOSPHORIBOSYL)ANTHRANILATE ISOMERASE"/>
    <property type="match status" value="1"/>
</dbReference>
<dbReference type="PANTHER" id="PTHR42894:SF1">
    <property type="entry name" value="N-(5'-PHOSPHORIBOSYL)ANTHRANILATE ISOMERASE"/>
    <property type="match status" value="1"/>
</dbReference>
<dbReference type="Pfam" id="PF00697">
    <property type="entry name" value="PRAI"/>
    <property type="match status" value="1"/>
</dbReference>
<dbReference type="SUPFAM" id="SSF51366">
    <property type="entry name" value="Ribulose-phoshate binding barrel"/>
    <property type="match status" value="1"/>
</dbReference>
<accession>Q5F9X5</accession>